<comment type="function">
    <text evidence="1">Lipoamide dehydrogenase is a component of the alpha-ketoacid dehydrogenase complexes.</text>
</comment>
<comment type="catalytic activity">
    <reaction>
        <text>N(6)-[(R)-dihydrolipoyl]-L-lysyl-[protein] + NAD(+) = N(6)-[(R)-lipoyl]-L-lysyl-[protein] + NADH + H(+)</text>
        <dbReference type="Rhea" id="RHEA:15045"/>
        <dbReference type="Rhea" id="RHEA-COMP:10474"/>
        <dbReference type="Rhea" id="RHEA-COMP:10475"/>
        <dbReference type="ChEBI" id="CHEBI:15378"/>
        <dbReference type="ChEBI" id="CHEBI:57540"/>
        <dbReference type="ChEBI" id="CHEBI:57945"/>
        <dbReference type="ChEBI" id="CHEBI:83099"/>
        <dbReference type="ChEBI" id="CHEBI:83100"/>
        <dbReference type="EC" id="1.8.1.4"/>
    </reaction>
</comment>
<comment type="cofactor">
    <cofactor evidence="1">
        <name>FAD</name>
        <dbReference type="ChEBI" id="CHEBI:57692"/>
    </cofactor>
    <text evidence="1">Binds 1 FAD per subunit.</text>
</comment>
<comment type="subunit">
    <text evidence="1">Homodimer.</text>
</comment>
<comment type="interaction">
    <interactant intactId="EBI-2259617">
        <id>P75393</id>
    </interactant>
    <interactant intactId="EBI-999394">
        <id>P00747</id>
        <label>PLG</label>
    </interactant>
    <organismsDiffer>true</organismsDiffer>
    <experiments>3</experiments>
</comment>
<comment type="subcellular location">
    <subcellularLocation>
        <location>Cytoplasm</location>
    </subcellularLocation>
</comment>
<comment type="miscellaneous">
    <text>The active site is a redox-active disulfide bond.</text>
</comment>
<comment type="similarity">
    <text evidence="2">Belongs to the class-I pyridine nucleotide-disulfide oxidoreductase family.</text>
</comment>
<feature type="chain" id="PRO_0000068032" description="Dihydrolipoyl dehydrogenase">
    <location>
        <begin position="1"/>
        <end position="457"/>
    </location>
</feature>
<feature type="active site" description="Proton acceptor" evidence="1">
    <location>
        <position position="437"/>
    </location>
</feature>
<feature type="binding site" evidence="1">
    <location>
        <begin position="32"/>
        <end position="40"/>
    </location>
    <ligand>
        <name>FAD</name>
        <dbReference type="ChEBI" id="CHEBI:57692"/>
    </ligand>
</feature>
<feature type="binding site" evidence="1">
    <location>
        <position position="49"/>
    </location>
    <ligand>
        <name>FAD</name>
        <dbReference type="ChEBI" id="CHEBI:57692"/>
    </ligand>
</feature>
<feature type="binding site" evidence="1">
    <location>
        <position position="113"/>
    </location>
    <ligand>
        <name>FAD</name>
        <dbReference type="ChEBI" id="CHEBI:57692"/>
    </ligand>
</feature>
<feature type="binding site" evidence="1">
    <location>
        <begin position="178"/>
        <end position="182"/>
    </location>
    <ligand>
        <name>NAD(+)</name>
        <dbReference type="ChEBI" id="CHEBI:57540"/>
    </ligand>
</feature>
<feature type="binding site" evidence="1">
    <location>
        <position position="235"/>
    </location>
    <ligand>
        <name>NAD(+)</name>
        <dbReference type="ChEBI" id="CHEBI:57540"/>
    </ligand>
</feature>
<feature type="binding site" evidence="1">
    <location>
        <begin position="262"/>
        <end position="265"/>
    </location>
    <ligand>
        <name>NAD(+)</name>
        <dbReference type="ChEBI" id="CHEBI:57540"/>
    </ligand>
</feature>
<feature type="binding site" evidence="1">
    <location>
        <position position="303"/>
    </location>
    <ligand>
        <name>FAD</name>
        <dbReference type="ChEBI" id="CHEBI:57692"/>
    </ligand>
</feature>
<feature type="binding site" evidence="1">
    <location>
        <position position="311"/>
    </location>
    <ligand>
        <name>FAD</name>
        <dbReference type="ChEBI" id="CHEBI:57692"/>
    </ligand>
</feature>
<feature type="disulfide bond" description="Redox-active" evidence="1">
    <location>
        <begin position="40"/>
        <end position="45"/>
    </location>
</feature>
<protein>
    <recommendedName>
        <fullName>Dihydrolipoyl dehydrogenase</fullName>
        <ecNumber>1.8.1.4</ecNumber>
    </recommendedName>
    <alternativeName>
        <fullName>Dihydrolipoamide dehydrogenase</fullName>
    </alternativeName>
    <alternativeName>
        <fullName>E3 component of pyruvate complex</fullName>
    </alternativeName>
</protein>
<evidence type="ECO:0000250" key="1"/>
<evidence type="ECO:0000305" key="2"/>
<dbReference type="EC" id="1.8.1.4"/>
<dbReference type="EMBL" id="U00089">
    <property type="protein sequence ID" value="AAB96096.1"/>
    <property type="molecule type" value="Genomic_DNA"/>
</dbReference>
<dbReference type="PIR" id="S73774">
    <property type="entry name" value="S73774"/>
</dbReference>
<dbReference type="RefSeq" id="NP_110078.1">
    <property type="nucleotide sequence ID" value="NC_000912.1"/>
</dbReference>
<dbReference type="SMR" id="P75393"/>
<dbReference type="IntAct" id="P75393">
    <property type="interactions" value="3"/>
</dbReference>
<dbReference type="STRING" id="272634.MPN_390"/>
<dbReference type="EnsemblBacteria" id="AAB96096">
    <property type="protein sequence ID" value="AAB96096"/>
    <property type="gene ID" value="MPN_390"/>
</dbReference>
<dbReference type="KEGG" id="mpn:MPN_390"/>
<dbReference type="PATRIC" id="fig|272634.6.peg.421"/>
<dbReference type="HOGENOM" id="CLU_016755_0_2_14"/>
<dbReference type="OrthoDB" id="9807946at2"/>
<dbReference type="BioCyc" id="MetaCyc:MONOMER-585"/>
<dbReference type="BioCyc" id="MPNE272634:G1GJ3-617-MONOMER"/>
<dbReference type="Proteomes" id="UP000000808">
    <property type="component" value="Chromosome"/>
</dbReference>
<dbReference type="GO" id="GO:0005829">
    <property type="term" value="C:cytosol"/>
    <property type="evidence" value="ECO:0000314"/>
    <property type="project" value="AgBase"/>
</dbReference>
<dbReference type="GO" id="GO:0016020">
    <property type="term" value="C:membrane"/>
    <property type="evidence" value="ECO:0000314"/>
    <property type="project" value="AgBase"/>
</dbReference>
<dbReference type="GO" id="GO:0004148">
    <property type="term" value="F:dihydrolipoyl dehydrogenase (NADH) activity"/>
    <property type="evidence" value="ECO:0007669"/>
    <property type="project" value="UniProtKB-EC"/>
</dbReference>
<dbReference type="GO" id="GO:0050660">
    <property type="term" value="F:flavin adenine dinucleotide binding"/>
    <property type="evidence" value="ECO:0007669"/>
    <property type="project" value="InterPro"/>
</dbReference>
<dbReference type="GO" id="GO:0006103">
    <property type="term" value="P:2-oxoglutarate metabolic process"/>
    <property type="evidence" value="ECO:0007669"/>
    <property type="project" value="TreeGrafter"/>
</dbReference>
<dbReference type="FunFam" id="3.30.390.30:FF:000001">
    <property type="entry name" value="Dihydrolipoyl dehydrogenase"/>
    <property type="match status" value="1"/>
</dbReference>
<dbReference type="Gene3D" id="3.30.390.30">
    <property type="match status" value="1"/>
</dbReference>
<dbReference type="Gene3D" id="3.50.50.60">
    <property type="entry name" value="FAD/NAD(P)-binding domain"/>
    <property type="match status" value="2"/>
</dbReference>
<dbReference type="InterPro" id="IPR050151">
    <property type="entry name" value="Class-I_Pyr_Nuc-Dis_Oxidored"/>
</dbReference>
<dbReference type="InterPro" id="IPR036188">
    <property type="entry name" value="FAD/NAD-bd_sf"/>
</dbReference>
<dbReference type="InterPro" id="IPR023753">
    <property type="entry name" value="FAD/NAD-binding_dom"/>
</dbReference>
<dbReference type="InterPro" id="IPR016156">
    <property type="entry name" value="FAD/NAD-linked_Rdtase_dimer_sf"/>
</dbReference>
<dbReference type="InterPro" id="IPR006258">
    <property type="entry name" value="Lipoamide_DH"/>
</dbReference>
<dbReference type="InterPro" id="IPR001100">
    <property type="entry name" value="Pyr_nuc-diS_OxRdtase"/>
</dbReference>
<dbReference type="InterPro" id="IPR004099">
    <property type="entry name" value="Pyr_nucl-diS_OxRdtase_dimer"/>
</dbReference>
<dbReference type="InterPro" id="IPR012999">
    <property type="entry name" value="Pyr_OxRdtase_I_AS"/>
</dbReference>
<dbReference type="NCBIfam" id="TIGR01350">
    <property type="entry name" value="lipoamide_DH"/>
    <property type="match status" value="1"/>
</dbReference>
<dbReference type="PANTHER" id="PTHR22912:SF160">
    <property type="entry name" value="DIHYDROLIPOYL DEHYDROGENASE"/>
    <property type="match status" value="1"/>
</dbReference>
<dbReference type="PANTHER" id="PTHR22912">
    <property type="entry name" value="DISULFIDE OXIDOREDUCTASE"/>
    <property type="match status" value="1"/>
</dbReference>
<dbReference type="Pfam" id="PF07992">
    <property type="entry name" value="Pyr_redox_2"/>
    <property type="match status" value="1"/>
</dbReference>
<dbReference type="Pfam" id="PF02852">
    <property type="entry name" value="Pyr_redox_dim"/>
    <property type="match status" value="1"/>
</dbReference>
<dbReference type="PIRSF" id="PIRSF000350">
    <property type="entry name" value="Mercury_reductase_MerA"/>
    <property type="match status" value="1"/>
</dbReference>
<dbReference type="PRINTS" id="PR00368">
    <property type="entry name" value="FADPNR"/>
</dbReference>
<dbReference type="PRINTS" id="PR00411">
    <property type="entry name" value="PNDRDTASEI"/>
</dbReference>
<dbReference type="SUPFAM" id="SSF51905">
    <property type="entry name" value="FAD/NAD(P)-binding domain"/>
    <property type="match status" value="1"/>
</dbReference>
<dbReference type="SUPFAM" id="SSF55424">
    <property type="entry name" value="FAD/NAD-linked reductases, dimerisation (C-terminal) domain"/>
    <property type="match status" value="1"/>
</dbReference>
<dbReference type="PROSITE" id="PS00076">
    <property type="entry name" value="PYRIDINE_REDOX_1"/>
    <property type="match status" value="1"/>
</dbReference>
<name>DLDH_MYCPN</name>
<proteinExistence type="evidence at protein level"/>
<gene>
    <name type="primary">pdhD</name>
    <name type="ordered locus">MPN_390</name>
    <name type="ORF">MP448</name>
</gene>
<keyword id="KW-0963">Cytoplasm</keyword>
<keyword id="KW-1015">Disulfide bond</keyword>
<keyword id="KW-0274">FAD</keyword>
<keyword id="KW-0285">Flavoprotein</keyword>
<keyword id="KW-0520">NAD</keyword>
<keyword id="KW-0560">Oxidoreductase</keyword>
<keyword id="KW-0676">Redox-active center</keyword>
<keyword id="KW-1185">Reference proteome</keyword>
<sequence length="457" mass="49437">MNYDLIIIGAGPAGYVAAEYAGKHKLKTLVVEKEYFGGVCLNVGCIPTKTLLKRAKIVDYLRHAQDYGISINGQVALNWNQLLEQKGKVVSKLVGGVKAIIASAKAETVMGEAKVLDPNTVEVAGKTYTTKSIVVATGSRPRYLTLPGFAEARQNGFVIDSTQALSLEGVPRKLVVVGGGVIGIEFAFLYASLGSEVTILQGVDRILEIFDTEVSDLVAKLLQTKNVKIITNAQVTRANNNEVFYSQNGQEGSVVGDRILVSIGRIPNTECLDGLNLQRDERNRIVLNQDLQTSIPNIYIVGDANAQLMLAHFAYQQGRYAVNHILNKKQVKPAQKLTCPSCIYTNPEVASVGYTEMELKKQGIPYVKTNLVLAHCGKAIADNETNGFVKMMFDPQTGKILGCCIIAATASDMIAELALAMGAGLTVFDIANSISPHPTINEMIADVCKKALFDHFK</sequence>
<accession>P75393</accession>
<organism>
    <name type="scientific">Mycoplasma pneumoniae (strain ATCC 29342 / M129 / Subtype 1)</name>
    <name type="common">Mycoplasmoides pneumoniae</name>
    <dbReference type="NCBI Taxonomy" id="272634"/>
    <lineage>
        <taxon>Bacteria</taxon>
        <taxon>Bacillati</taxon>
        <taxon>Mycoplasmatota</taxon>
        <taxon>Mycoplasmoidales</taxon>
        <taxon>Mycoplasmoidaceae</taxon>
        <taxon>Mycoplasmoides</taxon>
    </lineage>
</organism>
<reference key="1">
    <citation type="journal article" date="1996" name="Nucleic Acids Res.">
        <title>Complete sequence analysis of the genome of the bacterium Mycoplasma pneumoniae.</title>
        <authorList>
            <person name="Himmelreich R."/>
            <person name="Hilbert H."/>
            <person name="Plagens H."/>
            <person name="Pirkl E."/>
            <person name="Li B.-C."/>
            <person name="Herrmann R."/>
        </authorList>
    </citation>
    <scope>NUCLEOTIDE SEQUENCE [LARGE SCALE GENOMIC DNA]</scope>
    <source>
        <strain>ATCC 29342 / M129 / Subtype 1</strain>
    </source>
</reference>